<sequence length="231" mass="25160">MRGFFVTGTDTEVGKTVISSGLAALLKDNNRHVGVYKPFLSGISRHHPDSDTSLLKDMSQTSLSHEDITPFAFKAPLAPYVAGKLEGKTVTMEEVLSHWGRIREKHECFIVEGAGGISVPLGEDYLVSHVIKALQLPMIIVARPRLGTINHTFLTVKYAESMGLPIAGIIINGISDSPDEDEKTNPEMIERLCGVPILGVTPKLANVTKETVLHMVKDHINLSLLMNQVGV</sequence>
<feature type="chain" id="PRO_0000187949" description="ATP-dependent dethiobiotin synthetase BioD">
    <location>
        <begin position="1"/>
        <end position="231"/>
    </location>
</feature>
<feature type="active site" evidence="1">
    <location>
        <position position="37"/>
    </location>
</feature>
<feature type="binding site" evidence="1">
    <location>
        <begin position="12"/>
        <end position="17"/>
    </location>
    <ligand>
        <name>ATP</name>
        <dbReference type="ChEBI" id="CHEBI:30616"/>
    </ligand>
</feature>
<feature type="binding site" evidence="1">
    <location>
        <position position="16"/>
    </location>
    <ligand>
        <name>Mg(2+)</name>
        <dbReference type="ChEBI" id="CHEBI:18420"/>
    </ligand>
</feature>
<feature type="binding site" evidence="1">
    <location>
        <position position="41"/>
    </location>
    <ligand>
        <name>substrate</name>
    </ligand>
</feature>
<feature type="binding site" evidence="1">
    <location>
        <position position="51"/>
    </location>
    <ligand>
        <name>ATP</name>
        <dbReference type="ChEBI" id="CHEBI:30616"/>
    </ligand>
</feature>
<feature type="binding site" evidence="1">
    <location>
        <position position="51"/>
    </location>
    <ligand>
        <name>Mg(2+)</name>
        <dbReference type="ChEBI" id="CHEBI:18420"/>
    </ligand>
</feature>
<feature type="binding site" evidence="1">
    <location>
        <begin position="112"/>
        <end position="115"/>
    </location>
    <ligand>
        <name>ATP</name>
        <dbReference type="ChEBI" id="CHEBI:30616"/>
    </ligand>
</feature>
<feature type="binding site" evidence="1">
    <location>
        <position position="112"/>
    </location>
    <ligand>
        <name>Mg(2+)</name>
        <dbReference type="ChEBI" id="CHEBI:18420"/>
    </ligand>
</feature>
<feature type="binding site" evidence="1">
    <location>
        <begin position="202"/>
        <end position="204"/>
    </location>
    <ligand>
        <name>ATP</name>
        <dbReference type="ChEBI" id="CHEBI:30616"/>
    </ligand>
</feature>
<name>BIOD_BACSU</name>
<accession>P53558</accession>
<accession>O30501</accession>
<keyword id="KW-0067">ATP-binding</keyword>
<keyword id="KW-0093">Biotin biosynthesis</keyword>
<keyword id="KW-0963">Cytoplasm</keyword>
<keyword id="KW-0436">Ligase</keyword>
<keyword id="KW-0460">Magnesium</keyword>
<keyword id="KW-0479">Metal-binding</keyword>
<keyword id="KW-0547">Nucleotide-binding</keyword>
<keyword id="KW-1185">Reference proteome</keyword>
<protein>
    <recommendedName>
        <fullName evidence="1">ATP-dependent dethiobiotin synthetase BioD</fullName>
        <ecNumber evidence="1">6.3.3.3</ecNumber>
    </recommendedName>
    <alternativeName>
        <fullName evidence="1">DTB synthetase</fullName>
        <shortName evidence="1">DTBS</shortName>
    </alternativeName>
    <alternativeName>
        <fullName evidence="1">Dethiobiotin synthase</fullName>
    </alternativeName>
</protein>
<dbReference type="EC" id="6.3.3.3" evidence="1"/>
<dbReference type="EMBL" id="U51868">
    <property type="protein sequence ID" value="AAB17460.1"/>
    <property type="molecule type" value="Genomic_DNA"/>
</dbReference>
<dbReference type="EMBL" id="AF008220">
    <property type="protein sequence ID" value="AAC00264.1"/>
    <property type="status" value="ALT_INIT"/>
    <property type="molecule type" value="Genomic_DNA"/>
</dbReference>
<dbReference type="EMBL" id="AL009126">
    <property type="protein sequence ID" value="CAB14999.1"/>
    <property type="molecule type" value="Genomic_DNA"/>
</dbReference>
<dbReference type="PIR" id="E69594">
    <property type="entry name" value="E69594"/>
</dbReference>
<dbReference type="RefSeq" id="NP_390899.1">
    <property type="nucleotide sequence ID" value="NC_000964.3"/>
</dbReference>
<dbReference type="RefSeq" id="WP_004398591.1">
    <property type="nucleotide sequence ID" value="NZ_OZ025638.1"/>
</dbReference>
<dbReference type="SMR" id="P53558"/>
<dbReference type="FunCoup" id="P53558">
    <property type="interactions" value="318"/>
</dbReference>
<dbReference type="STRING" id="224308.BSU30210"/>
<dbReference type="PaxDb" id="224308-BSU30210"/>
<dbReference type="EnsemblBacteria" id="CAB14999">
    <property type="protein sequence ID" value="CAB14999"/>
    <property type="gene ID" value="BSU_30210"/>
</dbReference>
<dbReference type="GeneID" id="937264"/>
<dbReference type="KEGG" id="bsu:BSU30210"/>
<dbReference type="PATRIC" id="fig|224308.179.peg.3277"/>
<dbReference type="eggNOG" id="COG0132">
    <property type="taxonomic scope" value="Bacteria"/>
</dbReference>
<dbReference type="InParanoid" id="P53558"/>
<dbReference type="OrthoDB" id="9802097at2"/>
<dbReference type="PhylomeDB" id="P53558"/>
<dbReference type="BioCyc" id="BSUB:BSU30210-MONOMER"/>
<dbReference type="UniPathway" id="UPA00078">
    <property type="reaction ID" value="UER00161"/>
</dbReference>
<dbReference type="Proteomes" id="UP000001570">
    <property type="component" value="Chromosome"/>
</dbReference>
<dbReference type="GO" id="GO:0005829">
    <property type="term" value="C:cytosol"/>
    <property type="evidence" value="ECO:0000318"/>
    <property type="project" value="GO_Central"/>
</dbReference>
<dbReference type="GO" id="GO:0005524">
    <property type="term" value="F:ATP binding"/>
    <property type="evidence" value="ECO:0007669"/>
    <property type="project" value="UniProtKB-UniRule"/>
</dbReference>
<dbReference type="GO" id="GO:0004141">
    <property type="term" value="F:dethiobiotin synthase activity"/>
    <property type="evidence" value="ECO:0000318"/>
    <property type="project" value="GO_Central"/>
</dbReference>
<dbReference type="GO" id="GO:0000287">
    <property type="term" value="F:magnesium ion binding"/>
    <property type="evidence" value="ECO:0007669"/>
    <property type="project" value="UniProtKB-UniRule"/>
</dbReference>
<dbReference type="GO" id="GO:0009102">
    <property type="term" value="P:biotin biosynthetic process"/>
    <property type="evidence" value="ECO:0000318"/>
    <property type="project" value="GO_Central"/>
</dbReference>
<dbReference type="CDD" id="cd03109">
    <property type="entry name" value="DTBS"/>
    <property type="match status" value="1"/>
</dbReference>
<dbReference type="FunFam" id="3.40.50.300:FF:003304">
    <property type="entry name" value="ATP-dependent dethiobiotin synthetase BioD"/>
    <property type="match status" value="1"/>
</dbReference>
<dbReference type="Gene3D" id="3.40.50.300">
    <property type="entry name" value="P-loop containing nucleotide triphosphate hydrolases"/>
    <property type="match status" value="1"/>
</dbReference>
<dbReference type="HAMAP" id="MF_00336">
    <property type="entry name" value="BioD"/>
    <property type="match status" value="1"/>
</dbReference>
<dbReference type="InterPro" id="IPR004472">
    <property type="entry name" value="DTB_synth_BioD"/>
</dbReference>
<dbReference type="InterPro" id="IPR027417">
    <property type="entry name" value="P-loop_NTPase"/>
</dbReference>
<dbReference type="NCBIfam" id="TIGR00347">
    <property type="entry name" value="bioD"/>
    <property type="match status" value="1"/>
</dbReference>
<dbReference type="PANTHER" id="PTHR43210:SF2">
    <property type="entry name" value="ATP-DEPENDENT DETHIOBIOTIN SYNTHETASE BIOD 2"/>
    <property type="match status" value="1"/>
</dbReference>
<dbReference type="PANTHER" id="PTHR43210">
    <property type="entry name" value="DETHIOBIOTIN SYNTHETASE"/>
    <property type="match status" value="1"/>
</dbReference>
<dbReference type="Pfam" id="PF13500">
    <property type="entry name" value="AAA_26"/>
    <property type="match status" value="1"/>
</dbReference>
<dbReference type="PIRSF" id="PIRSF006755">
    <property type="entry name" value="DTB_synth"/>
    <property type="match status" value="1"/>
</dbReference>
<dbReference type="SUPFAM" id="SSF52540">
    <property type="entry name" value="P-loop containing nucleoside triphosphate hydrolases"/>
    <property type="match status" value="1"/>
</dbReference>
<reference key="1">
    <citation type="journal article" date="1996" name="J. Bacteriol.">
        <title>Cloning, sequencing, and characterization of the Bacillus subtilis biotin biosynthetic operon.</title>
        <authorList>
            <person name="Bower S."/>
            <person name="Perkins J.B."/>
            <person name="Yocum R.R."/>
            <person name="Howitt C.L."/>
            <person name="Rahaim P."/>
            <person name="Pero J."/>
        </authorList>
    </citation>
    <scope>NUCLEOTIDE SEQUENCE [GENOMIC DNA]</scope>
</reference>
<reference key="2">
    <citation type="journal article" date="1997" name="Microbiology">
        <title>Sequencing and functional annotation of the Bacillus subtilis genes in the 200 kb rrnB-dnaB region.</title>
        <authorList>
            <person name="Lapidus A."/>
            <person name="Galleron N."/>
            <person name="Sorokin A."/>
            <person name="Ehrlich S.D."/>
        </authorList>
    </citation>
    <scope>NUCLEOTIDE SEQUENCE [GENOMIC DNA]</scope>
    <source>
        <strain>168</strain>
    </source>
</reference>
<reference key="3">
    <citation type="journal article" date="1997" name="Nature">
        <title>The complete genome sequence of the Gram-positive bacterium Bacillus subtilis.</title>
        <authorList>
            <person name="Kunst F."/>
            <person name="Ogasawara N."/>
            <person name="Moszer I."/>
            <person name="Albertini A.M."/>
            <person name="Alloni G."/>
            <person name="Azevedo V."/>
            <person name="Bertero M.G."/>
            <person name="Bessieres P."/>
            <person name="Bolotin A."/>
            <person name="Borchert S."/>
            <person name="Borriss R."/>
            <person name="Boursier L."/>
            <person name="Brans A."/>
            <person name="Braun M."/>
            <person name="Brignell S.C."/>
            <person name="Bron S."/>
            <person name="Brouillet S."/>
            <person name="Bruschi C.V."/>
            <person name="Caldwell B."/>
            <person name="Capuano V."/>
            <person name="Carter N.M."/>
            <person name="Choi S.-K."/>
            <person name="Codani J.-J."/>
            <person name="Connerton I.F."/>
            <person name="Cummings N.J."/>
            <person name="Daniel R.A."/>
            <person name="Denizot F."/>
            <person name="Devine K.M."/>
            <person name="Duesterhoeft A."/>
            <person name="Ehrlich S.D."/>
            <person name="Emmerson P.T."/>
            <person name="Entian K.-D."/>
            <person name="Errington J."/>
            <person name="Fabret C."/>
            <person name="Ferrari E."/>
            <person name="Foulger D."/>
            <person name="Fritz C."/>
            <person name="Fujita M."/>
            <person name="Fujita Y."/>
            <person name="Fuma S."/>
            <person name="Galizzi A."/>
            <person name="Galleron N."/>
            <person name="Ghim S.-Y."/>
            <person name="Glaser P."/>
            <person name="Goffeau A."/>
            <person name="Golightly E.J."/>
            <person name="Grandi G."/>
            <person name="Guiseppi G."/>
            <person name="Guy B.J."/>
            <person name="Haga K."/>
            <person name="Haiech J."/>
            <person name="Harwood C.R."/>
            <person name="Henaut A."/>
            <person name="Hilbert H."/>
            <person name="Holsappel S."/>
            <person name="Hosono S."/>
            <person name="Hullo M.-F."/>
            <person name="Itaya M."/>
            <person name="Jones L.-M."/>
            <person name="Joris B."/>
            <person name="Karamata D."/>
            <person name="Kasahara Y."/>
            <person name="Klaerr-Blanchard M."/>
            <person name="Klein C."/>
            <person name="Kobayashi Y."/>
            <person name="Koetter P."/>
            <person name="Koningstein G."/>
            <person name="Krogh S."/>
            <person name="Kumano M."/>
            <person name="Kurita K."/>
            <person name="Lapidus A."/>
            <person name="Lardinois S."/>
            <person name="Lauber J."/>
            <person name="Lazarevic V."/>
            <person name="Lee S.-M."/>
            <person name="Levine A."/>
            <person name="Liu H."/>
            <person name="Masuda S."/>
            <person name="Mauel C."/>
            <person name="Medigue C."/>
            <person name="Medina N."/>
            <person name="Mellado R.P."/>
            <person name="Mizuno M."/>
            <person name="Moestl D."/>
            <person name="Nakai S."/>
            <person name="Noback M."/>
            <person name="Noone D."/>
            <person name="O'Reilly M."/>
            <person name="Ogawa K."/>
            <person name="Ogiwara A."/>
            <person name="Oudega B."/>
            <person name="Park S.-H."/>
            <person name="Parro V."/>
            <person name="Pohl T.M."/>
            <person name="Portetelle D."/>
            <person name="Porwollik S."/>
            <person name="Prescott A.M."/>
            <person name="Presecan E."/>
            <person name="Pujic P."/>
            <person name="Purnelle B."/>
            <person name="Rapoport G."/>
            <person name="Rey M."/>
            <person name="Reynolds S."/>
            <person name="Rieger M."/>
            <person name="Rivolta C."/>
            <person name="Rocha E."/>
            <person name="Roche B."/>
            <person name="Rose M."/>
            <person name="Sadaie Y."/>
            <person name="Sato T."/>
            <person name="Scanlan E."/>
            <person name="Schleich S."/>
            <person name="Schroeter R."/>
            <person name="Scoffone F."/>
            <person name="Sekiguchi J."/>
            <person name="Sekowska A."/>
            <person name="Seror S.J."/>
            <person name="Serror P."/>
            <person name="Shin B.-S."/>
            <person name="Soldo B."/>
            <person name="Sorokin A."/>
            <person name="Tacconi E."/>
            <person name="Takagi T."/>
            <person name="Takahashi H."/>
            <person name="Takemaru K."/>
            <person name="Takeuchi M."/>
            <person name="Tamakoshi A."/>
            <person name="Tanaka T."/>
            <person name="Terpstra P."/>
            <person name="Tognoni A."/>
            <person name="Tosato V."/>
            <person name="Uchiyama S."/>
            <person name="Vandenbol M."/>
            <person name="Vannier F."/>
            <person name="Vassarotti A."/>
            <person name="Viari A."/>
            <person name="Wambutt R."/>
            <person name="Wedler E."/>
            <person name="Wedler H."/>
            <person name="Weitzenegger T."/>
            <person name="Winters P."/>
            <person name="Wipat A."/>
            <person name="Yamamoto H."/>
            <person name="Yamane K."/>
            <person name="Yasumoto K."/>
            <person name="Yata K."/>
            <person name="Yoshida K."/>
            <person name="Yoshikawa H.-F."/>
            <person name="Zumstein E."/>
            <person name="Yoshikawa H."/>
            <person name="Danchin A."/>
        </authorList>
    </citation>
    <scope>NUCLEOTIDE SEQUENCE [LARGE SCALE GENOMIC DNA]</scope>
    <source>
        <strain>168</strain>
    </source>
</reference>
<comment type="function">
    <text evidence="1">Catalyzes a mechanistically unusual reaction, the ATP-dependent insertion of CO2 between the N7 and N8 nitrogen atoms of 7,8-diaminopelargonic acid (DAPA, also called 7,8-diammoniononanoate) to form a ureido ring.</text>
</comment>
<comment type="catalytic activity">
    <reaction evidence="1">
        <text>(7R,8S)-7,8-diammoniononanoate + CO2 + ATP = (4R,5S)-dethiobiotin + ADP + phosphate + 3 H(+)</text>
        <dbReference type="Rhea" id="RHEA:15805"/>
        <dbReference type="ChEBI" id="CHEBI:15378"/>
        <dbReference type="ChEBI" id="CHEBI:16526"/>
        <dbReference type="ChEBI" id="CHEBI:30616"/>
        <dbReference type="ChEBI" id="CHEBI:43474"/>
        <dbReference type="ChEBI" id="CHEBI:149469"/>
        <dbReference type="ChEBI" id="CHEBI:149473"/>
        <dbReference type="ChEBI" id="CHEBI:456216"/>
        <dbReference type="EC" id="6.3.3.3"/>
    </reaction>
</comment>
<comment type="cofactor">
    <cofactor evidence="1">
        <name>Mg(2+)</name>
        <dbReference type="ChEBI" id="CHEBI:18420"/>
    </cofactor>
</comment>
<comment type="pathway">
    <text evidence="1">Cofactor biosynthesis; biotin biosynthesis; biotin from 7,8-diaminononanoate: step 1/2.</text>
</comment>
<comment type="subunit">
    <text evidence="1">Homodimer.</text>
</comment>
<comment type="subcellular location">
    <subcellularLocation>
        <location evidence="1">Cytoplasm</location>
    </subcellularLocation>
</comment>
<comment type="similarity">
    <text evidence="1">Belongs to the dethiobiotin synthetase family.</text>
</comment>
<comment type="sequence caution" evidence="2">
    <conflict type="erroneous initiation">
        <sequence resource="EMBL-CDS" id="AAC00264"/>
    </conflict>
    <text>Truncated N-terminus.</text>
</comment>
<evidence type="ECO:0000255" key="1">
    <source>
        <dbReference type="HAMAP-Rule" id="MF_00336"/>
    </source>
</evidence>
<evidence type="ECO:0000305" key="2"/>
<gene>
    <name evidence="1" type="primary">bioD</name>
    <name type="ordered locus">BSU30210</name>
</gene>
<organism>
    <name type="scientific">Bacillus subtilis (strain 168)</name>
    <dbReference type="NCBI Taxonomy" id="224308"/>
    <lineage>
        <taxon>Bacteria</taxon>
        <taxon>Bacillati</taxon>
        <taxon>Bacillota</taxon>
        <taxon>Bacilli</taxon>
        <taxon>Bacillales</taxon>
        <taxon>Bacillaceae</taxon>
        <taxon>Bacillus</taxon>
    </lineage>
</organism>
<proteinExistence type="inferred from homology"/>